<organism>
    <name type="scientific">Streptococcus pneumoniae (strain ATCC BAA-255 / R6)</name>
    <dbReference type="NCBI Taxonomy" id="171101"/>
    <lineage>
        <taxon>Bacteria</taxon>
        <taxon>Bacillati</taxon>
        <taxon>Bacillota</taxon>
        <taxon>Bacilli</taxon>
        <taxon>Lactobacillales</taxon>
        <taxon>Streptococcaceae</taxon>
        <taxon>Streptococcus</taxon>
    </lineage>
</organism>
<gene>
    <name type="primary">mreD</name>
    <name type="ordered locus">spr2022</name>
</gene>
<evidence type="ECO:0000255" key="1"/>
<evidence type="ECO:0000269" key="2">
    <source>
    </source>
</evidence>
<evidence type="ECO:0000305" key="3"/>
<evidence type="ECO:0000305" key="4">
    <source>
    </source>
</evidence>
<accession>Q8DMY3</accession>
<comment type="function">
    <text evidence="4">Involved in formation and maintenance of cell shape, probably part of the elongasome which synthesizes peripheral peptidoglycan (PG).</text>
</comment>
<comment type="subunit">
    <text evidence="2">Interacts with MreC in the elongasome; interaction requires the 90 C-terminal residues of MreC.</text>
</comment>
<comment type="subcellular location">
    <subcellularLocation>
        <location evidence="3">Cell membrane</location>
        <topology evidence="1">Multi-pass membrane protein</topology>
    </subcellularLocation>
</comment>
<comment type="similarity">
    <text evidence="3">Belongs to the MreD family.</text>
</comment>
<sequence>MRQLKRVGVFLLLPFFVLIDAHISQLLGSFFPHVHLASHFLFLFLLFETIEVSEYLYLVYCFVIGLVYDVYFFHLIGITTLLFILLGAFLHKLNSVILLNRWTRMLAMIVLTFLFEMGSYLLAFMVGLTVDSMSIFIVYSLVPTMILNFLWITVFQFIFEKYYL</sequence>
<keyword id="KW-1003">Cell membrane</keyword>
<keyword id="KW-0133">Cell shape</keyword>
<keyword id="KW-0472">Membrane</keyword>
<keyword id="KW-1185">Reference proteome</keyword>
<keyword id="KW-0812">Transmembrane</keyword>
<keyword id="KW-1133">Transmembrane helix</keyword>
<protein>
    <recommendedName>
        <fullName>Cell shape-determining protein MreD</fullName>
    </recommendedName>
</protein>
<reference key="1">
    <citation type="journal article" date="2001" name="J. Bacteriol.">
        <title>Genome of the bacterium Streptococcus pneumoniae strain R6.</title>
        <authorList>
            <person name="Hoskins J."/>
            <person name="Alborn W.E. Jr."/>
            <person name="Arnold J."/>
            <person name="Blaszczak L.C."/>
            <person name="Burgett S."/>
            <person name="DeHoff B.S."/>
            <person name="Estrem S.T."/>
            <person name="Fritz L."/>
            <person name="Fu D.-J."/>
            <person name="Fuller W."/>
            <person name="Geringer C."/>
            <person name="Gilmour R."/>
            <person name="Glass J.S."/>
            <person name="Khoja H."/>
            <person name="Kraft A.R."/>
            <person name="Lagace R.E."/>
            <person name="LeBlanc D.J."/>
            <person name="Lee L.N."/>
            <person name="Lefkowitz E.J."/>
            <person name="Lu J."/>
            <person name="Matsushima P."/>
            <person name="McAhren S.M."/>
            <person name="McHenney M."/>
            <person name="McLeaster K."/>
            <person name="Mundy C.W."/>
            <person name="Nicas T.I."/>
            <person name="Norris F.H."/>
            <person name="O'Gara M."/>
            <person name="Peery R.B."/>
            <person name="Robertson G.T."/>
            <person name="Rockey P."/>
            <person name="Sun P.-M."/>
            <person name="Winkler M.E."/>
            <person name="Yang Y."/>
            <person name="Young-Bellido M."/>
            <person name="Zhao G."/>
            <person name="Zook C.A."/>
            <person name="Baltz R.H."/>
            <person name="Jaskunas S.R."/>
            <person name="Rosteck P.R. Jr."/>
            <person name="Skatrud P.L."/>
            <person name="Glass J.I."/>
        </authorList>
    </citation>
    <scope>NUCLEOTIDE SEQUENCE [LARGE SCALE GENOMIC DNA]</scope>
    <source>
        <strain>ATCC BAA-255 / R6</strain>
    </source>
</reference>
<reference key="2">
    <citation type="journal article" date="2017" name="Mol. Microbiol.">
        <title>Identification of EloR (Spr1851) as a regulator of cell elongation in Streptococcus pneumoniae.</title>
        <authorList>
            <person name="Stamsaas G.A."/>
            <person name="Straume D."/>
            <person name="Ruud Winther A."/>
            <person name="Kjos M."/>
            <person name="Frantzen C.A."/>
            <person name="Haavarstein L.S."/>
        </authorList>
    </citation>
    <scope>SUBUNIT</scope>
    <source>
        <strain>R6 / R704</strain>
    </source>
</reference>
<proteinExistence type="evidence at protein level"/>
<name>MRED_STRR6</name>
<dbReference type="EMBL" id="AE007317">
    <property type="protein sequence ID" value="AAL00824.1"/>
    <property type="molecule type" value="Genomic_DNA"/>
</dbReference>
<dbReference type="PIR" id="C98124">
    <property type="entry name" value="C98124"/>
</dbReference>
<dbReference type="PIR" id="H95258">
    <property type="entry name" value="H95258"/>
</dbReference>
<dbReference type="RefSeq" id="NP_359613.1">
    <property type="nucleotide sequence ID" value="NC_003098.1"/>
</dbReference>
<dbReference type="RefSeq" id="WP_001249454.1">
    <property type="nucleotide sequence ID" value="NC_003098.1"/>
</dbReference>
<dbReference type="STRING" id="171101.spr2022"/>
<dbReference type="GeneID" id="45652563"/>
<dbReference type="KEGG" id="spr:spr2022"/>
<dbReference type="PATRIC" id="fig|171101.6.peg.2188"/>
<dbReference type="eggNOG" id="COG2891">
    <property type="taxonomic scope" value="Bacteria"/>
</dbReference>
<dbReference type="HOGENOM" id="CLU_121959_2_0_9"/>
<dbReference type="Proteomes" id="UP000000586">
    <property type="component" value="Chromosome"/>
</dbReference>
<dbReference type="GO" id="GO:0005886">
    <property type="term" value="C:plasma membrane"/>
    <property type="evidence" value="ECO:0007669"/>
    <property type="project" value="UniProtKB-SubCell"/>
</dbReference>
<dbReference type="GO" id="GO:0008360">
    <property type="term" value="P:regulation of cell shape"/>
    <property type="evidence" value="ECO:0007669"/>
    <property type="project" value="UniProtKB-KW"/>
</dbReference>
<dbReference type="InterPro" id="IPR007227">
    <property type="entry name" value="Cell_shape_determining_MreD"/>
</dbReference>
<dbReference type="NCBIfam" id="TIGR03426">
    <property type="entry name" value="shape_MreD"/>
    <property type="match status" value="1"/>
</dbReference>
<dbReference type="Pfam" id="PF04093">
    <property type="entry name" value="MreD"/>
    <property type="match status" value="1"/>
</dbReference>
<feature type="chain" id="PRO_0000454548" description="Cell shape-determining protein MreD">
    <location>
        <begin position="1"/>
        <end position="164"/>
    </location>
</feature>
<feature type="transmembrane region" description="Helical" evidence="1">
    <location>
        <begin position="7"/>
        <end position="27"/>
    </location>
</feature>
<feature type="transmembrane region" description="Helical" evidence="1">
    <location>
        <begin position="30"/>
        <end position="50"/>
    </location>
</feature>
<feature type="transmembrane region" description="Helical" evidence="1">
    <location>
        <begin position="70"/>
        <end position="90"/>
    </location>
</feature>
<feature type="transmembrane region" description="Helical" evidence="1">
    <location>
        <begin position="106"/>
        <end position="126"/>
    </location>
</feature>
<feature type="transmembrane region" description="Helical" evidence="1">
    <location>
        <begin position="135"/>
        <end position="155"/>
    </location>
</feature>